<proteinExistence type="evidence at protein level"/>
<accession>Q55487</accession>
<evidence type="ECO:0000255" key="1"/>
<evidence type="ECO:0000305" key="2"/>
<evidence type="ECO:0007829" key="3">
    <source>
        <dbReference type="PDB" id="5EKE"/>
    </source>
</evidence>
<evidence type="ECO:0007829" key="4">
    <source>
        <dbReference type="PDB" id="5EKP"/>
    </source>
</evidence>
<sequence>MTIELSIVIPMYNEEDNLEHLFARLLEVLTPLKITYEIICVNDGSKDKTLKQLIDCYQSNRQIKIVNLSRNFGKEIALSAGIDYAQGNAVIPIDADLQDPPELIHELVDKWREGYDIVYATRRSRQGETWVKQFTAKMFYKVIGRMTEIKIPPNTGDFRLMDRKVVNAIKQLPERTRFMKGLFAWVGYRQTFVLFDREPRFQGQTKWNYWKLWNFALDGIFSFSLLPLKVWTYLGSIISLLSLAYASFLILKTITLGVDVPGYASLMVAILFLGGVQLISLGVIGEYLGRVYEEVKARPLYLVSDLWGLEYLPLEKLN</sequence>
<gene>
    <name type="ordered locus">sll0501</name>
</gene>
<keyword id="KW-0002">3D-structure</keyword>
<keyword id="KW-1003">Cell membrane</keyword>
<keyword id="KW-0328">Glycosyltransferase</keyword>
<keyword id="KW-0472">Membrane</keyword>
<keyword id="KW-1185">Reference proteome</keyword>
<keyword id="KW-0808">Transferase</keyword>
<keyword id="KW-0812">Transmembrane</keyword>
<keyword id="KW-1133">Transmembrane helix</keyword>
<feature type="chain" id="PRO_0000059210" description="Uncharacterized glycosyltransferase sll0501">
    <location>
        <begin position="1"/>
        <end position="318"/>
    </location>
</feature>
<feature type="transmembrane region" description="Helical" evidence="1">
    <location>
        <begin position="230"/>
        <end position="250"/>
    </location>
</feature>
<feature type="transmembrane region" description="Helical" evidence="1">
    <location>
        <begin position="264"/>
        <end position="284"/>
    </location>
</feature>
<feature type="strand" evidence="3">
    <location>
        <begin position="5"/>
        <end position="13"/>
    </location>
</feature>
<feature type="turn" evidence="3">
    <location>
        <begin position="15"/>
        <end position="17"/>
    </location>
</feature>
<feature type="helix" evidence="3">
    <location>
        <begin position="18"/>
        <end position="29"/>
    </location>
</feature>
<feature type="helix" evidence="3">
    <location>
        <begin position="30"/>
        <end position="32"/>
    </location>
</feature>
<feature type="strand" evidence="3">
    <location>
        <begin position="36"/>
        <end position="42"/>
    </location>
</feature>
<feature type="strand" evidence="3">
    <location>
        <begin position="46"/>
        <end position="48"/>
    </location>
</feature>
<feature type="helix" evidence="3">
    <location>
        <begin position="49"/>
        <end position="59"/>
    </location>
</feature>
<feature type="strand" evidence="3">
    <location>
        <begin position="63"/>
        <end position="70"/>
    </location>
</feature>
<feature type="helix" evidence="3">
    <location>
        <begin position="74"/>
        <end position="83"/>
    </location>
</feature>
<feature type="strand" evidence="3">
    <location>
        <begin position="87"/>
        <end position="92"/>
    </location>
</feature>
<feature type="helix" evidence="3">
    <location>
        <begin position="103"/>
        <end position="112"/>
    </location>
</feature>
<feature type="strand" evidence="3">
    <location>
        <begin position="116"/>
        <end position="122"/>
    </location>
</feature>
<feature type="helix" evidence="3">
    <location>
        <begin position="134"/>
        <end position="139"/>
    </location>
</feature>
<feature type="turn" evidence="3">
    <location>
        <begin position="140"/>
        <end position="143"/>
    </location>
</feature>
<feature type="helix" evidence="4">
    <location>
        <begin position="145"/>
        <end position="149"/>
    </location>
</feature>
<feature type="strand" evidence="3">
    <location>
        <begin position="151"/>
        <end position="153"/>
    </location>
</feature>
<feature type="strand" evidence="3">
    <location>
        <begin position="159"/>
        <end position="162"/>
    </location>
</feature>
<feature type="helix" evidence="3">
    <location>
        <begin position="163"/>
        <end position="168"/>
    </location>
</feature>
<feature type="helix" evidence="3">
    <location>
        <begin position="173"/>
        <end position="180"/>
    </location>
</feature>
<feature type="helix" evidence="3">
    <location>
        <begin position="182"/>
        <end position="186"/>
    </location>
</feature>
<feature type="strand" evidence="3">
    <location>
        <begin position="188"/>
        <end position="195"/>
    </location>
</feature>
<feature type="helix" evidence="3">
    <location>
        <begin position="209"/>
        <end position="220"/>
    </location>
</feature>
<feature type="helix" evidence="3">
    <location>
        <begin position="226"/>
        <end position="247"/>
    </location>
</feature>
<feature type="helix" evidence="3">
    <location>
        <begin position="250"/>
        <end position="254"/>
    </location>
</feature>
<feature type="helix" evidence="3">
    <location>
        <begin position="262"/>
        <end position="295"/>
    </location>
</feature>
<feature type="strand" evidence="3">
    <location>
        <begin position="303"/>
        <end position="309"/>
    </location>
</feature>
<reference key="1">
    <citation type="journal article" date="1995" name="DNA Res.">
        <title>Sequence analysis of the genome of the unicellular cyanobacterium Synechocystis sp. strain PCC6803. I. Sequence features in the 1 Mb region from map positions 64% to 92% of the genome.</title>
        <authorList>
            <person name="Kaneko T."/>
            <person name="Tanaka A."/>
            <person name="Sato S."/>
            <person name="Kotani H."/>
            <person name="Sazuka T."/>
            <person name="Miyajima N."/>
            <person name="Sugiura M."/>
            <person name="Tabata S."/>
        </authorList>
    </citation>
    <scope>NUCLEOTIDE SEQUENCE [LARGE SCALE GENOMIC DNA]</scope>
    <source>
        <strain>ATCC 27184 / PCC 6803 / N-1</strain>
    </source>
</reference>
<reference key="2">
    <citation type="journal article" date="1996" name="DNA Res.">
        <title>Sequence analysis of the genome of the unicellular cyanobacterium Synechocystis sp. strain PCC6803. II. Sequence determination of the entire genome and assignment of potential protein-coding regions.</title>
        <authorList>
            <person name="Kaneko T."/>
            <person name="Sato S."/>
            <person name="Kotani H."/>
            <person name="Tanaka A."/>
            <person name="Asamizu E."/>
            <person name="Nakamura Y."/>
            <person name="Miyajima N."/>
            <person name="Hirosawa M."/>
            <person name="Sugiura M."/>
            <person name="Sasamoto S."/>
            <person name="Kimura T."/>
            <person name="Hosouchi T."/>
            <person name="Matsuno A."/>
            <person name="Muraki A."/>
            <person name="Nakazaki N."/>
            <person name="Naruo K."/>
            <person name="Okumura S."/>
            <person name="Shimpo S."/>
            <person name="Takeuchi C."/>
            <person name="Wada T."/>
            <person name="Watanabe A."/>
            <person name="Yamada M."/>
            <person name="Yasuda M."/>
            <person name="Tabata S."/>
        </authorList>
    </citation>
    <scope>NUCLEOTIDE SEQUENCE [LARGE SCALE GENOMIC DNA]</scope>
    <source>
        <strain>ATCC 27184 / PCC 6803 / Kazusa</strain>
    </source>
</reference>
<organism>
    <name type="scientific">Synechocystis sp. (strain ATCC 27184 / PCC 6803 / Kazusa)</name>
    <dbReference type="NCBI Taxonomy" id="1111708"/>
    <lineage>
        <taxon>Bacteria</taxon>
        <taxon>Bacillati</taxon>
        <taxon>Cyanobacteriota</taxon>
        <taxon>Cyanophyceae</taxon>
        <taxon>Synechococcales</taxon>
        <taxon>Merismopediaceae</taxon>
        <taxon>Synechocystis</taxon>
    </lineage>
</organism>
<protein>
    <recommendedName>
        <fullName>Uncharacterized glycosyltransferase sll0501</fullName>
        <ecNumber>2.4.-.-</ecNumber>
    </recommendedName>
</protein>
<dbReference type="EC" id="2.4.-.-"/>
<dbReference type="EMBL" id="BA000022">
    <property type="protein sequence ID" value="BAA10834.1"/>
    <property type="molecule type" value="Genomic_DNA"/>
</dbReference>
<dbReference type="PIR" id="S75987">
    <property type="entry name" value="S75987"/>
</dbReference>
<dbReference type="PDB" id="5EKE">
    <property type="method" value="X-ray"/>
    <property type="resolution" value="3.00 A"/>
    <property type="chains" value="A/B/C/D=2-318"/>
</dbReference>
<dbReference type="PDB" id="5EKP">
    <property type="method" value="X-ray"/>
    <property type="resolution" value="3.19 A"/>
    <property type="chains" value="A/B/C/D=2-318"/>
</dbReference>
<dbReference type="PDBsum" id="5EKE"/>
<dbReference type="PDBsum" id="5EKP"/>
<dbReference type="SMR" id="Q55487"/>
<dbReference type="STRING" id="1148.gene:10500338"/>
<dbReference type="CAZy" id="GT2">
    <property type="family name" value="Glycosyltransferase Family 2"/>
</dbReference>
<dbReference type="TCDB" id="4.D.1.1.14">
    <property type="family name" value="the putative vectorial glycosyl polymerization (vgp) family"/>
</dbReference>
<dbReference type="PaxDb" id="1148-1001347"/>
<dbReference type="EnsemblBacteria" id="BAA10834">
    <property type="protein sequence ID" value="BAA10834"/>
    <property type="gene ID" value="BAA10834"/>
</dbReference>
<dbReference type="KEGG" id="syn:sll0501"/>
<dbReference type="eggNOG" id="COG0463">
    <property type="taxonomic scope" value="Bacteria"/>
</dbReference>
<dbReference type="InParanoid" id="Q55487"/>
<dbReference type="PhylomeDB" id="Q55487"/>
<dbReference type="EvolutionaryTrace" id="Q55487"/>
<dbReference type="Proteomes" id="UP000001425">
    <property type="component" value="Chromosome"/>
</dbReference>
<dbReference type="GO" id="GO:0005886">
    <property type="term" value="C:plasma membrane"/>
    <property type="evidence" value="ECO:0000318"/>
    <property type="project" value="GO_Central"/>
</dbReference>
<dbReference type="GO" id="GO:0016757">
    <property type="term" value="F:glycosyltransferase activity"/>
    <property type="evidence" value="ECO:0007669"/>
    <property type="project" value="UniProtKB-KW"/>
</dbReference>
<dbReference type="CDD" id="cd04187">
    <property type="entry name" value="DPM1_like_bac"/>
    <property type="match status" value="1"/>
</dbReference>
<dbReference type="FunFam" id="3.90.550.10:FF:000079">
    <property type="entry name" value="Probable glycosyl transferase"/>
    <property type="match status" value="1"/>
</dbReference>
<dbReference type="Gene3D" id="3.90.550.10">
    <property type="entry name" value="Spore Coat Polysaccharide Biosynthesis Protein SpsA, Chain A"/>
    <property type="match status" value="1"/>
</dbReference>
<dbReference type="InterPro" id="IPR001173">
    <property type="entry name" value="Glyco_trans_2-like"/>
</dbReference>
<dbReference type="InterPro" id="IPR050256">
    <property type="entry name" value="Glycosyltransferase_2"/>
</dbReference>
<dbReference type="InterPro" id="IPR029044">
    <property type="entry name" value="Nucleotide-diphossugar_trans"/>
</dbReference>
<dbReference type="PANTHER" id="PTHR48090:SF1">
    <property type="entry name" value="PROPHAGE BACTOPRENOL GLUCOSYL TRANSFERASE HOMOLOG"/>
    <property type="match status" value="1"/>
</dbReference>
<dbReference type="PANTHER" id="PTHR48090">
    <property type="entry name" value="UNDECAPRENYL-PHOSPHATE 4-DEOXY-4-FORMAMIDO-L-ARABINOSE TRANSFERASE-RELATED"/>
    <property type="match status" value="1"/>
</dbReference>
<dbReference type="Pfam" id="PF00535">
    <property type="entry name" value="Glycos_transf_2"/>
    <property type="match status" value="1"/>
</dbReference>
<dbReference type="SUPFAM" id="SSF53448">
    <property type="entry name" value="Nucleotide-diphospho-sugar transferases"/>
    <property type="match status" value="1"/>
</dbReference>
<comment type="subcellular location">
    <subcellularLocation>
        <location evidence="2">Cell membrane</location>
        <topology evidence="2">Multi-pass membrane protein</topology>
    </subcellularLocation>
</comment>
<comment type="similarity">
    <text evidence="2">Belongs to the glycosyltransferase 2 family. GtrB subfamily.</text>
</comment>
<name>Y501_SYNY3</name>